<feature type="chain" id="PRO_0000068715" description="Bifunctional protein GlmU">
    <location>
        <begin position="1"/>
        <end position="451"/>
    </location>
</feature>
<feature type="region of interest" description="Pyrophosphorylase" evidence="1">
    <location>
        <begin position="1"/>
        <end position="229"/>
    </location>
</feature>
<feature type="region of interest" description="Linker" evidence="1">
    <location>
        <begin position="230"/>
        <end position="250"/>
    </location>
</feature>
<feature type="region of interest" description="N-acetyltransferase" evidence="1">
    <location>
        <begin position="251"/>
        <end position="451"/>
    </location>
</feature>
<feature type="active site" description="Proton acceptor" evidence="1">
    <location>
        <position position="362"/>
    </location>
</feature>
<feature type="binding site" evidence="1">
    <location>
        <begin position="8"/>
        <end position="11"/>
    </location>
    <ligand>
        <name>UDP-N-acetyl-alpha-D-glucosamine</name>
        <dbReference type="ChEBI" id="CHEBI:57705"/>
    </ligand>
</feature>
<feature type="binding site" evidence="1">
    <location>
        <position position="22"/>
    </location>
    <ligand>
        <name>UDP-N-acetyl-alpha-D-glucosamine</name>
        <dbReference type="ChEBI" id="CHEBI:57705"/>
    </ligand>
</feature>
<feature type="binding site" evidence="1">
    <location>
        <position position="72"/>
    </location>
    <ligand>
        <name>UDP-N-acetyl-alpha-D-glucosamine</name>
        <dbReference type="ChEBI" id="CHEBI:57705"/>
    </ligand>
</feature>
<feature type="binding site" evidence="1">
    <location>
        <begin position="77"/>
        <end position="78"/>
    </location>
    <ligand>
        <name>UDP-N-acetyl-alpha-D-glucosamine</name>
        <dbReference type="ChEBI" id="CHEBI:57705"/>
    </ligand>
</feature>
<feature type="binding site" evidence="1">
    <location>
        <position position="102"/>
    </location>
    <ligand>
        <name>Mg(2+)</name>
        <dbReference type="ChEBI" id="CHEBI:18420"/>
    </ligand>
</feature>
<feature type="binding site" evidence="1">
    <location>
        <position position="139"/>
    </location>
    <ligand>
        <name>UDP-N-acetyl-alpha-D-glucosamine</name>
        <dbReference type="ChEBI" id="CHEBI:57705"/>
    </ligand>
</feature>
<feature type="binding site" evidence="1">
    <location>
        <position position="154"/>
    </location>
    <ligand>
        <name>UDP-N-acetyl-alpha-D-glucosamine</name>
        <dbReference type="ChEBI" id="CHEBI:57705"/>
    </ligand>
</feature>
<feature type="binding site" evidence="1">
    <location>
        <position position="227"/>
    </location>
    <ligand>
        <name>Mg(2+)</name>
        <dbReference type="ChEBI" id="CHEBI:18420"/>
    </ligand>
</feature>
<feature type="binding site" evidence="1">
    <location>
        <position position="227"/>
    </location>
    <ligand>
        <name>UDP-N-acetyl-alpha-D-glucosamine</name>
        <dbReference type="ChEBI" id="CHEBI:57705"/>
    </ligand>
</feature>
<feature type="binding site" evidence="1">
    <location>
        <position position="332"/>
    </location>
    <ligand>
        <name>UDP-N-acetyl-alpha-D-glucosamine</name>
        <dbReference type="ChEBI" id="CHEBI:57705"/>
    </ligand>
</feature>
<feature type="binding site" evidence="1">
    <location>
        <position position="350"/>
    </location>
    <ligand>
        <name>UDP-N-acetyl-alpha-D-glucosamine</name>
        <dbReference type="ChEBI" id="CHEBI:57705"/>
    </ligand>
</feature>
<feature type="binding site" evidence="1">
    <location>
        <position position="365"/>
    </location>
    <ligand>
        <name>UDP-N-acetyl-alpha-D-glucosamine</name>
        <dbReference type="ChEBI" id="CHEBI:57705"/>
    </ligand>
</feature>
<feature type="binding site" evidence="1">
    <location>
        <position position="376"/>
    </location>
    <ligand>
        <name>UDP-N-acetyl-alpha-D-glucosamine</name>
        <dbReference type="ChEBI" id="CHEBI:57705"/>
    </ligand>
</feature>
<feature type="binding site" evidence="1">
    <location>
        <begin position="385"/>
        <end position="386"/>
    </location>
    <ligand>
        <name>acetyl-CoA</name>
        <dbReference type="ChEBI" id="CHEBI:57288"/>
    </ligand>
</feature>
<feature type="binding site" evidence="1">
    <location>
        <position position="422"/>
    </location>
    <ligand>
        <name>acetyl-CoA</name>
        <dbReference type="ChEBI" id="CHEBI:57288"/>
    </ligand>
</feature>
<feature type="binding site" evidence="1">
    <location>
        <position position="439"/>
    </location>
    <ligand>
        <name>acetyl-CoA</name>
        <dbReference type="ChEBI" id="CHEBI:57288"/>
    </ligand>
</feature>
<dbReference type="EC" id="2.7.7.23" evidence="1"/>
<dbReference type="EC" id="2.3.1.157" evidence="1"/>
<dbReference type="EMBL" id="CP000029">
    <property type="protein sequence ID" value="AAW53489.1"/>
    <property type="molecule type" value="Genomic_DNA"/>
</dbReference>
<dbReference type="RefSeq" id="WP_001832214.1">
    <property type="nucleotide sequence ID" value="NC_002976.3"/>
</dbReference>
<dbReference type="SMR" id="Q5HRQ6"/>
<dbReference type="STRING" id="176279.SERP0137"/>
<dbReference type="GeneID" id="50019590"/>
<dbReference type="KEGG" id="ser:SERP0137"/>
<dbReference type="eggNOG" id="COG1207">
    <property type="taxonomic scope" value="Bacteria"/>
</dbReference>
<dbReference type="HOGENOM" id="CLU_029499_15_2_9"/>
<dbReference type="UniPathway" id="UPA00113">
    <property type="reaction ID" value="UER00532"/>
</dbReference>
<dbReference type="UniPathway" id="UPA00113">
    <property type="reaction ID" value="UER00533"/>
</dbReference>
<dbReference type="UniPathway" id="UPA00973"/>
<dbReference type="Proteomes" id="UP000000531">
    <property type="component" value="Chromosome"/>
</dbReference>
<dbReference type="GO" id="GO:0005737">
    <property type="term" value="C:cytoplasm"/>
    <property type="evidence" value="ECO:0007669"/>
    <property type="project" value="UniProtKB-SubCell"/>
</dbReference>
<dbReference type="GO" id="GO:0016020">
    <property type="term" value="C:membrane"/>
    <property type="evidence" value="ECO:0007669"/>
    <property type="project" value="GOC"/>
</dbReference>
<dbReference type="GO" id="GO:0019134">
    <property type="term" value="F:glucosamine-1-phosphate N-acetyltransferase activity"/>
    <property type="evidence" value="ECO:0007669"/>
    <property type="project" value="UniProtKB-UniRule"/>
</dbReference>
<dbReference type="GO" id="GO:0000287">
    <property type="term" value="F:magnesium ion binding"/>
    <property type="evidence" value="ECO:0007669"/>
    <property type="project" value="UniProtKB-UniRule"/>
</dbReference>
<dbReference type="GO" id="GO:0003977">
    <property type="term" value="F:UDP-N-acetylglucosamine diphosphorylase activity"/>
    <property type="evidence" value="ECO:0007669"/>
    <property type="project" value="UniProtKB-UniRule"/>
</dbReference>
<dbReference type="GO" id="GO:0000902">
    <property type="term" value="P:cell morphogenesis"/>
    <property type="evidence" value="ECO:0007669"/>
    <property type="project" value="UniProtKB-UniRule"/>
</dbReference>
<dbReference type="GO" id="GO:0071555">
    <property type="term" value="P:cell wall organization"/>
    <property type="evidence" value="ECO:0007669"/>
    <property type="project" value="UniProtKB-KW"/>
</dbReference>
<dbReference type="GO" id="GO:0009245">
    <property type="term" value="P:lipid A biosynthetic process"/>
    <property type="evidence" value="ECO:0007669"/>
    <property type="project" value="UniProtKB-UniRule"/>
</dbReference>
<dbReference type="GO" id="GO:0009252">
    <property type="term" value="P:peptidoglycan biosynthetic process"/>
    <property type="evidence" value="ECO:0007669"/>
    <property type="project" value="UniProtKB-UniRule"/>
</dbReference>
<dbReference type="GO" id="GO:0008360">
    <property type="term" value="P:regulation of cell shape"/>
    <property type="evidence" value="ECO:0007669"/>
    <property type="project" value="UniProtKB-KW"/>
</dbReference>
<dbReference type="GO" id="GO:0006048">
    <property type="term" value="P:UDP-N-acetylglucosamine biosynthetic process"/>
    <property type="evidence" value="ECO:0007669"/>
    <property type="project" value="UniProtKB-UniPathway"/>
</dbReference>
<dbReference type="CDD" id="cd02540">
    <property type="entry name" value="GT2_GlmU_N_bac"/>
    <property type="match status" value="1"/>
</dbReference>
<dbReference type="CDD" id="cd03353">
    <property type="entry name" value="LbH_GlmU_C"/>
    <property type="match status" value="1"/>
</dbReference>
<dbReference type="Gene3D" id="2.160.10.10">
    <property type="entry name" value="Hexapeptide repeat proteins"/>
    <property type="match status" value="1"/>
</dbReference>
<dbReference type="Gene3D" id="3.90.550.10">
    <property type="entry name" value="Spore Coat Polysaccharide Biosynthesis Protein SpsA, Chain A"/>
    <property type="match status" value="1"/>
</dbReference>
<dbReference type="HAMAP" id="MF_01631">
    <property type="entry name" value="GlmU"/>
    <property type="match status" value="1"/>
</dbReference>
<dbReference type="InterPro" id="IPR005882">
    <property type="entry name" value="Bifunctional_GlmU"/>
</dbReference>
<dbReference type="InterPro" id="IPR050065">
    <property type="entry name" value="GlmU-like"/>
</dbReference>
<dbReference type="InterPro" id="IPR038009">
    <property type="entry name" value="GlmU_C_LbH"/>
</dbReference>
<dbReference type="InterPro" id="IPR001451">
    <property type="entry name" value="Hexapep"/>
</dbReference>
<dbReference type="InterPro" id="IPR018357">
    <property type="entry name" value="Hexapep_transf_CS"/>
</dbReference>
<dbReference type="InterPro" id="IPR005835">
    <property type="entry name" value="NTP_transferase_dom"/>
</dbReference>
<dbReference type="InterPro" id="IPR029044">
    <property type="entry name" value="Nucleotide-diphossugar_trans"/>
</dbReference>
<dbReference type="InterPro" id="IPR011004">
    <property type="entry name" value="Trimer_LpxA-like_sf"/>
</dbReference>
<dbReference type="NCBIfam" id="TIGR01173">
    <property type="entry name" value="glmU"/>
    <property type="match status" value="1"/>
</dbReference>
<dbReference type="NCBIfam" id="NF010934">
    <property type="entry name" value="PRK14354.1"/>
    <property type="match status" value="1"/>
</dbReference>
<dbReference type="PANTHER" id="PTHR43584:SF3">
    <property type="entry name" value="BIFUNCTIONAL PROTEIN GLMU"/>
    <property type="match status" value="1"/>
</dbReference>
<dbReference type="PANTHER" id="PTHR43584">
    <property type="entry name" value="NUCLEOTIDYL TRANSFERASE"/>
    <property type="match status" value="1"/>
</dbReference>
<dbReference type="Pfam" id="PF00132">
    <property type="entry name" value="Hexapep"/>
    <property type="match status" value="1"/>
</dbReference>
<dbReference type="Pfam" id="PF00483">
    <property type="entry name" value="NTP_transferase"/>
    <property type="match status" value="1"/>
</dbReference>
<dbReference type="SUPFAM" id="SSF53448">
    <property type="entry name" value="Nucleotide-diphospho-sugar transferases"/>
    <property type="match status" value="1"/>
</dbReference>
<dbReference type="SUPFAM" id="SSF51161">
    <property type="entry name" value="Trimeric LpxA-like enzymes"/>
    <property type="match status" value="1"/>
</dbReference>
<dbReference type="PROSITE" id="PS00101">
    <property type="entry name" value="HEXAPEP_TRANSFERASES"/>
    <property type="match status" value="1"/>
</dbReference>
<accession>Q5HRQ6</accession>
<proteinExistence type="inferred from homology"/>
<evidence type="ECO:0000255" key="1">
    <source>
        <dbReference type="HAMAP-Rule" id="MF_01631"/>
    </source>
</evidence>
<organism>
    <name type="scientific">Staphylococcus epidermidis (strain ATCC 35984 / DSM 28319 / BCRC 17069 / CCUG 31568 / BM 3577 / RP62A)</name>
    <dbReference type="NCBI Taxonomy" id="176279"/>
    <lineage>
        <taxon>Bacteria</taxon>
        <taxon>Bacillati</taxon>
        <taxon>Bacillota</taxon>
        <taxon>Bacilli</taxon>
        <taxon>Bacillales</taxon>
        <taxon>Staphylococcaceae</taxon>
        <taxon>Staphylococcus</taxon>
    </lineage>
</organism>
<sequence length="451" mass="49146">MQRHAIILAAGKGTRMKSKKYKVLHEVAGKPMVEHVLNNVKQAGVDQIVTIIGHGAESVKDTLGNQSLYSFQDKQLGTAHAVKMAHEHLADKEGTTLVVCGDTPLITYQTLQSLIEHHESTQSHVTVLSASTINPYGYGRIIRNHNGILERIVEEKDANDSERAIKEISSGIFAFNNRVLFEKLEQVKNDNAQGEYYLPDVLSLILKDGGKAEVYCTEDFDEIIGVNDRLMLSEAEKALQQRINRYHMENGVTIIDPSSTFIGTDVKIGIDTTIEPGVRIGGHTTIEEDVWIGQYSEINNSTIHSNANIKQSVINDSIVGENTTVGPFAQLRPGSNLGSEVKVGNFVEVKKADIKDGAKVSHLSYIGDAEIGERTNIGCGSITVNYDGANKFKTIVGKDAFIGCNTNLIAPVTVGNHTLIAAGSTITDNIPEDSLALARARQVNKEGYLKK</sequence>
<gene>
    <name evidence="1" type="primary">glmU</name>
    <name type="synonym">gcaD</name>
    <name type="ordered locus">SERP0137</name>
</gene>
<comment type="function">
    <text evidence="1">Catalyzes the last two sequential reactions in the de novo biosynthetic pathway for UDP-N-acetylglucosamine (UDP-GlcNAc). The C-terminal domain catalyzes the transfer of acetyl group from acetyl coenzyme A to glucosamine-1-phosphate (GlcN-1-P) to produce N-acetylglucosamine-1-phosphate (GlcNAc-1-P), which is converted into UDP-GlcNAc by the transfer of uridine 5-monophosphate (from uridine 5-triphosphate), a reaction catalyzed by the N-terminal domain.</text>
</comment>
<comment type="catalytic activity">
    <reaction evidence="1">
        <text>alpha-D-glucosamine 1-phosphate + acetyl-CoA = N-acetyl-alpha-D-glucosamine 1-phosphate + CoA + H(+)</text>
        <dbReference type="Rhea" id="RHEA:13725"/>
        <dbReference type="ChEBI" id="CHEBI:15378"/>
        <dbReference type="ChEBI" id="CHEBI:57287"/>
        <dbReference type="ChEBI" id="CHEBI:57288"/>
        <dbReference type="ChEBI" id="CHEBI:57776"/>
        <dbReference type="ChEBI" id="CHEBI:58516"/>
        <dbReference type="EC" id="2.3.1.157"/>
    </reaction>
</comment>
<comment type="catalytic activity">
    <reaction evidence="1">
        <text>N-acetyl-alpha-D-glucosamine 1-phosphate + UTP + H(+) = UDP-N-acetyl-alpha-D-glucosamine + diphosphate</text>
        <dbReference type="Rhea" id="RHEA:13509"/>
        <dbReference type="ChEBI" id="CHEBI:15378"/>
        <dbReference type="ChEBI" id="CHEBI:33019"/>
        <dbReference type="ChEBI" id="CHEBI:46398"/>
        <dbReference type="ChEBI" id="CHEBI:57705"/>
        <dbReference type="ChEBI" id="CHEBI:57776"/>
        <dbReference type="EC" id="2.7.7.23"/>
    </reaction>
</comment>
<comment type="cofactor">
    <cofactor evidence="1">
        <name>Mg(2+)</name>
        <dbReference type="ChEBI" id="CHEBI:18420"/>
    </cofactor>
    <text evidence="1">Binds 1 Mg(2+) ion per subunit.</text>
</comment>
<comment type="pathway">
    <text evidence="1">Nucleotide-sugar biosynthesis; UDP-N-acetyl-alpha-D-glucosamine biosynthesis; N-acetyl-alpha-D-glucosamine 1-phosphate from alpha-D-glucosamine 6-phosphate (route II): step 2/2.</text>
</comment>
<comment type="pathway">
    <text evidence="1">Nucleotide-sugar biosynthesis; UDP-N-acetyl-alpha-D-glucosamine biosynthesis; UDP-N-acetyl-alpha-D-glucosamine from N-acetyl-alpha-D-glucosamine 1-phosphate: step 1/1.</text>
</comment>
<comment type="pathway">
    <text evidence="1">Bacterial outer membrane biogenesis; LPS lipid A biosynthesis.</text>
</comment>
<comment type="subunit">
    <text evidence="1">Homotrimer.</text>
</comment>
<comment type="subcellular location">
    <subcellularLocation>
        <location evidence="1">Cytoplasm</location>
    </subcellularLocation>
</comment>
<comment type="similarity">
    <text evidence="1">In the N-terminal section; belongs to the N-acetylglucosamine-1-phosphate uridyltransferase family.</text>
</comment>
<comment type="similarity">
    <text evidence="1">In the C-terminal section; belongs to the transferase hexapeptide repeat family.</text>
</comment>
<name>GLMU_STAEQ</name>
<keyword id="KW-0012">Acyltransferase</keyword>
<keyword id="KW-0133">Cell shape</keyword>
<keyword id="KW-0961">Cell wall biogenesis/degradation</keyword>
<keyword id="KW-0963">Cytoplasm</keyword>
<keyword id="KW-0460">Magnesium</keyword>
<keyword id="KW-0479">Metal-binding</keyword>
<keyword id="KW-0511">Multifunctional enzyme</keyword>
<keyword id="KW-0548">Nucleotidyltransferase</keyword>
<keyword id="KW-0573">Peptidoglycan synthesis</keyword>
<keyword id="KW-1185">Reference proteome</keyword>
<keyword id="KW-0677">Repeat</keyword>
<keyword id="KW-0808">Transferase</keyword>
<protein>
    <recommendedName>
        <fullName evidence="1">Bifunctional protein GlmU</fullName>
    </recommendedName>
    <domain>
        <recommendedName>
            <fullName evidence="1">UDP-N-acetylglucosamine pyrophosphorylase</fullName>
            <ecNumber evidence="1">2.7.7.23</ecNumber>
        </recommendedName>
        <alternativeName>
            <fullName evidence="1">N-acetylglucosamine-1-phosphate uridyltransferase</fullName>
        </alternativeName>
    </domain>
    <domain>
        <recommendedName>
            <fullName evidence="1">Glucosamine-1-phosphate N-acetyltransferase</fullName>
            <ecNumber evidence="1">2.3.1.157</ecNumber>
        </recommendedName>
    </domain>
</protein>
<reference key="1">
    <citation type="journal article" date="2005" name="J. Bacteriol.">
        <title>Insights on evolution of virulence and resistance from the complete genome analysis of an early methicillin-resistant Staphylococcus aureus strain and a biofilm-producing methicillin-resistant Staphylococcus epidermidis strain.</title>
        <authorList>
            <person name="Gill S.R."/>
            <person name="Fouts D.E."/>
            <person name="Archer G.L."/>
            <person name="Mongodin E.F."/>
            <person name="DeBoy R.T."/>
            <person name="Ravel J."/>
            <person name="Paulsen I.T."/>
            <person name="Kolonay J.F."/>
            <person name="Brinkac L.M."/>
            <person name="Beanan M.J."/>
            <person name="Dodson R.J."/>
            <person name="Daugherty S.C."/>
            <person name="Madupu R."/>
            <person name="Angiuoli S.V."/>
            <person name="Durkin A.S."/>
            <person name="Haft D.H."/>
            <person name="Vamathevan J.J."/>
            <person name="Khouri H."/>
            <person name="Utterback T.R."/>
            <person name="Lee C."/>
            <person name="Dimitrov G."/>
            <person name="Jiang L."/>
            <person name="Qin H."/>
            <person name="Weidman J."/>
            <person name="Tran K."/>
            <person name="Kang K.H."/>
            <person name="Hance I.R."/>
            <person name="Nelson K.E."/>
            <person name="Fraser C.M."/>
        </authorList>
    </citation>
    <scope>NUCLEOTIDE SEQUENCE [LARGE SCALE GENOMIC DNA]</scope>
    <source>
        <strain>ATCC 35984 / DSM 28319 / BCRC 17069 / CCUG 31568 / BM 3577 / RP62A</strain>
    </source>
</reference>